<reference key="1">
    <citation type="journal article" date="1998" name="Nature">
        <title>Deciphering the biology of Mycobacterium tuberculosis from the complete genome sequence.</title>
        <authorList>
            <person name="Cole S.T."/>
            <person name="Brosch R."/>
            <person name="Parkhill J."/>
            <person name="Garnier T."/>
            <person name="Churcher C.M."/>
            <person name="Harris D.E."/>
            <person name="Gordon S.V."/>
            <person name="Eiglmeier K."/>
            <person name="Gas S."/>
            <person name="Barry C.E. III"/>
            <person name="Tekaia F."/>
            <person name="Badcock K."/>
            <person name="Basham D."/>
            <person name="Brown D."/>
            <person name="Chillingworth T."/>
            <person name="Connor R."/>
            <person name="Davies R.M."/>
            <person name="Devlin K."/>
            <person name="Feltwell T."/>
            <person name="Gentles S."/>
            <person name="Hamlin N."/>
            <person name="Holroyd S."/>
            <person name="Hornsby T."/>
            <person name="Jagels K."/>
            <person name="Krogh A."/>
            <person name="McLean J."/>
            <person name="Moule S."/>
            <person name="Murphy L.D."/>
            <person name="Oliver S."/>
            <person name="Osborne J."/>
            <person name="Quail M.A."/>
            <person name="Rajandream M.A."/>
            <person name="Rogers J."/>
            <person name="Rutter S."/>
            <person name="Seeger K."/>
            <person name="Skelton S."/>
            <person name="Squares S."/>
            <person name="Squares R."/>
            <person name="Sulston J.E."/>
            <person name="Taylor K."/>
            <person name="Whitehead S."/>
            <person name="Barrell B.G."/>
        </authorList>
    </citation>
    <scope>NUCLEOTIDE SEQUENCE [LARGE SCALE GENOMIC DNA]</scope>
    <source>
        <strain>ATCC 25618 / H37Rv</strain>
    </source>
</reference>
<reference key="2">
    <citation type="journal article" date="2011" name="Mol. Cell. Proteomics">
        <title>Proteogenomic analysis of Mycobacterium tuberculosis by high resolution mass spectrometry.</title>
        <authorList>
            <person name="Kelkar D.S."/>
            <person name="Kumar D."/>
            <person name="Kumar P."/>
            <person name="Balakrishnan L."/>
            <person name="Muthusamy B."/>
            <person name="Yadav A.K."/>
            <person name="Shrivastava P."/>
            <person name="Marimuthu A."/>
            <person name="Anand S."/>
            <person name="Sundaram H."/>
            <person name="Kingsbury R."/>
            <person name="Harsha H.C."/>
            <person name="Nair B."/>
            <person name="Prasad T.S."/>
            <person name="Chauhan D.S."/>
            <person name="Katoch K."/>
            <person name="Katoch V.M."/>
            <person name="Kumar P."/>
            <person name="Chaerkady R."/>
            <person name="Ramachandran S."/>
            <person name="Dash D."/>
            <person name="Pandey A."/>
        </authorList>
    </citation>
    <scope>IDENTIFICATION BY MASS SPECTROMETRY [LARGE SCALE ANALYSIS]</scope>
    <source>
        <strain>ATCC 25618 / H37Rv</strain>
    </source>
</reference>
<proteinExistence type="evidence at protein level"/>
<evidence type="ECO:0000255" key="1"/>
<evidence type="ECO:0000305" key="2"/>
<gene>
    <name type="ordered locus">Rv2576c</name>
    <name type="ORF">MTCY227.25</name>
</gene>
<keyword id="KW-0472">Membrane</keyword>
<keyword id="KW-1185">Reference proteome</keyword>
<keyword id="KW-0812">Transmembrane</keyword>
<keyword id="KW-1133">Transmembrane helix</keyword>
<comment type="subcellular location">
    <subcellularLocation>
        <location evidence="2">Membrane</location>
        <topology evidence="2">Single-pass membrane protein</topology>
    </subcellularLocation>
</comment>
<sequence length="154" mass="15793">MPAGVGNASGSVLDMTSVRTVPSAVALVTFAGAALSGVIPAIARADPVGHQVTYTVTTTSDLMANIRYMSADPPSMAAFNADSSKYMITLHTPIAGGQPLVYTATLANPSQWAIVTASGGLRVNPEFHCEIVVDGQVVVSQDGGSGVQCSTRPW</sequence>
<accession>P9WL83</accession>
<accession>L0TCZ5</accession>
<accession>P65021</accession>
<accession>Q50645</accession>
<protein>
    <recommendedName>
        <fullName>Uncharacterized protein Rv2576c</fullName>
    </recommendedName>
</protein>
<name>Y2576_MYCTU</name>
<dbReference type="EMBL" id="AL123456">
    <property type="protein sequence ID" value="CCP45372.1"/>
    <property type="molecule type" value="Genomic_DNA"/>
</dbReference>
<dbReference type="PIR" id="G70724">
    <property type="entry name" value="G70724"/>
</dbReference>
<dbReference type="RefSeq" id="NP_217092.1">
    <property type="nucleotide sequence ID" value="NC_000962.3"/>
</dbReference>
<dbReference type="RefSeq" id="WP_003413352.1">
    <property type="nucleotide sequence ID" value="NZ_NVQJ01000023.1"/>
</dbReference>
<dbReference type="SMR" id="P9WL83"/>
<dbReference type="STRING" id="83332.Rv2576c"/>
<dbReference type="PaxDb" id="83332-Rv2576c"/>
<dbReference type="DNASU" id="887251"/>
<dbReference type="GeneID" id="887251"/>
<dbReference type="KEGG" id="mtu:Rv2576c"/>
<dbReference type="KEGG" id="mtv:RVBD_2576c"/>
<dbReference type="PATRIC" id="fig|83332.111.peg.2878"/>
<dbReference type="TubercuList" id="Rv2576c"/>
<dbReference type="eggNOG" id="ENOG5031MDJ">
    <property type="taxonomic scope" value="Bacteria"/>
</dbReference>
<dbReference type="InParanoid" id="P9WL83"/>
<dbReference type="OrthoDB" id="4621589at2"/>
<dbReference type="Proteomes" id="UP000001584">
    <property type="component" value="Chromosome"/>
</dbReference>
<dbReference type="GO" id="GO:0005576">
    <property type="term" value="C:extracellular region"/>
    <property type="evidence" value="ECO:0007005"/>
    <property type="project" value="MTBBASE"/>
</dbReference>
<dbReference type="GO" id="GO:0016020">
    <property type="term" value="C:membrane"/>
    <property type="evidence" value="ECO:0007669"/>
    <property type="project" value="UniProtKB-SubCell"/>
</dbReference>
<dbReference type="GO" id="GO:0009274">
    <property type="term" value="C:peptidoglycan-based cell wall"/>
    <property type="evidence" value="ECO:0007005"/>
    <property type="project" value="MTBBASE"/>
</dbReference>
<dbReference type="InterPro" id="IPR016793">
    <property type="entry name" value="UCP021591"/>
</dbReference>
<dbReference type="PIRSF" id="PIRSF021591">
    <property type="entry name" value="UCP021591"/>
    <property type="match status" value="1"/>
</dbReference>
<feature type="chain" id="PRO_0000104058" description="Uncharacterized protein Rv2576c">
    <location>
        <begin position="1"/>
        <end position="154"/>
    </location>
</feature>
<feature type="transmembrane region" description="Helical" evidence="1">
    <location>
        <begin position="23"/>
        <end position="43"/>
    </location>
</feature>
<organism>
    <name type="scientific">Mycobacterium tuberculosis (strain ATCC 25618 / H37Rv)</name>
    <dbReference type="NCBI Taxonomy" id="83332"/>
    <lineage>
        <taxon>Bacteria</taxon>
        <taxon>Bacillati</taxon>
        <taxon>Actinomycetota</taxon>
        <taxon>Actinomycetes</taxon>
        <taxon>Mycobacteriales</taxon>
        <taxon>Mycobacteriaceae</taxon>
        <taxon>Mycobacterium</taxon>
        <taxon>Mycobacterium tuberculosis complex</taxon>
    </lineage>
</organism>